<accession>Q9RUW8</accession>
<gene>
    <name evidence="6" type="primary">rsr</name>
    <name type="ordered locus">DR_1262</name>
</gene>
<dbReference type="EMBL" id="AE000513">
    <property type="protein sequence ID" value="AAF10833.1"/>
    <property type="molecule type" value="Genomic_DNA"/>
</dbReference>
<dbReference type="PIR" id="C75418">
    <property type="entry name" value="C75418"/>
</dbReference>
<dbReference type="RefSeq" id="NP_294986.1">
    <property type="nucleotide sequence ID" value="NC_001263.1"/>
</dbReference>
<dbReference type="RefSeq" id="WP_010887905.1">
    <property type="nucleotide sequence ID" value="NC_001263.1"/>
</dbReference>
<dbReference type="PDB" id="2NVO">
    <property type="method" value="X-ray"/>
    <property type="resolution" value="1.89 A"/>
    <property type="chains" value="A=1-531"/>
</dbReference>
<dbReference type="PDBsum" id="2NVO"/>
<dbReference type="SMR" id="Q9RUW8"/>
<dbReference type="DIP" id="DIP-58600N"/>
<dbReference type="IntAct" id="Q9RUW8">
    <property type="interactions" value="3"/>
</dbReference>
<dbReference type="STRING" id="243230.DR_1262"/>
<dbReference type="PaxDb" id="243230-DR_1262"/>
<dbReference type="EnsemblBacteria" id="AAF10833">
    <property type="protein sequence ID" value="AAF10833"/>
    <property type="gene ID" value="DR_1262"/>
</dbReference>
<dbReference type="GeneID" id="69517507"/>
<dbReference type="KEGG" id="dra:DR_1262"/>
<dbReference type="PATRIC" id="fig|243230.17.peg.1457"/>
<dbReference type="eggNOG" id="COG2304">
    <property type="taxonomic scope" value="Bacteria"/>
</dbReference>
<dbReference type="HOGENOM" id="CLU_024421_1_0_0"/>
<dbReference type="InParanoid" id="Q9RUW8"/>
<dbReference type="OrthoDB" id="2986092at2"/>
<dbReference type="EvolutionaryTrace" id="Q9RUW8"/>
<dbReference type="Proteomes" id="UP000002524">
    <property type="component" value="Chromosome 1"/>
</dbReference>
<dbReference type="GO" id="GO:0005737">
    <property type="term" value="C:cytoplasm"/>
    <property type="evidence" value="ECO:0007669"/>
    <property type="project" value="UniProtKB-SubCell"/>
</dbReference>
<dbReference type="GO" id="GO:1990904">
    <property type="term" value="C:ribonucleoprotein complex"/>
    <property type="evidence" value="ECO:0000318"/>
    <property type="project" value="GO_Central"/>
</dbReference>
<dbReference type="GO" id="GO:0046872">
    <property type="term" value="F:metal ion binding"/>
    <property type="evidence" value="ECO:0007669"/>
    <property type="project" value="UniProtKB-KW"/>
</dbReference>
<dbReference type="GO" id="GO:0003723">
    <property type="term" value="F:RNA binding"/>
    <property type="evidence" value="ECO:0000318"/>
    <property type="project" value="GO_Central"/>
</dbReference>
<dbReference type="Gene3D" id="3.40.50.410">
    <property type="entry name" value="von Willebrand factor, type A domain"/>
    <property type="match status" value="2"/>
</dbReference>
<dbReference type="InterPro" id="IPR053680">
    <property type="entry name" value="Ro_60_kDa"/>
</dbReference>
<dbReference type="InterPro" id="IPR040322">
    <property type="entry name" value="TROVE2"/>
</dbReference>
<dbReference type="InterPro" id="IPR008858">
    <property type="entry name" value="TROVE_dom"/>
</dbReference>
<dbReference type="InterPro" id="IPR037214">
    <property type="entry name" value="TROVE_dom_sf"/>
</dbReference>
<dbReference type="InterPro" id="IPR056800">
    <property type="entry name" value="vWA_Ro60"/>
</dbReference>
<dbReference type="InterPro" id="IPR036465">
    <property type="entry name" value="vWFA_dom_sf"/>
</dbReference>
<dbReference type="NCBIfam" id="NF041674">
    <property type="entry name" value="RNA-bind_Rsr"/>
    <property type="match status" value="1"/>
</dbReference>
<dbReference type="PANTHER" id="PTHR14202">
    <property type="entry name" value="60 KDA RIBONUCLEOPROTEIN SSA/RO"/>
    <property type="match status" value="1"/>
</dbReference>
<dbReference type="PANTHER" id="PTHR14202:SF0">
    <property type="entry name" value="RNA-BINDING PROTEIN RO60"/>
    <property type="match status" value="1"/>
</dbReference>
<dbReference type="Pfam" id="PF05731">
    <property type="entry name" value="TROVE"/>
    <property type="match status" value="2"/>
</dbReference>
<dbReference type="Pfam" id="PF25045">
    <property type="entry name" value="vWA_Ro60"/>
    <property type="match status" value="1"/>
</dbReference>
<dbReference type="SUPFAM" id="SSF140864">
    <property type="entry name" value="TROVE domain-like"/>
    <property type="match status" value="1"/>
</dbReference>
<dbReference type="SUPFAM" id="SSF53300">
    <property type="entry name" value="vWA-like"/>
    <property type="match status" value="1"/>
</dbReference>
<dbReference type="PROSITE" id="PS50988">
    <property type="entry name" value="TROVE"/>
    <property type="match status" value="1"/>
</dbReference>
<comment type="function">
    <text evidence="4 5">Binds to several small RNAs that accumulate during recovery from UV irradiation (PubMed:17392270). Contributes to the resistance of D.radiodurans to ultraviolet irradiation (PubMed:10766734).</text>
</comment>
<comment type="subunit">
    <text evidence="5">Forms oligomers upon binding DrY RNA, The multimers are of an average size of 700 kDa and are composed of around 12 molecules of Rsr-DrY RNA.</text>
</comment>
<comment type="interaction">
    <interactant intactId="EBI-15836588">
        <id>Q9RUW8</id>
    </interactant>
    <interactant intactId="EBI-15836673">
        <id>Q9RSR1</id>
        <label>pnp</label>
    </interactant>
    <organismsDiffer>false</organismsDiffer>
    <experiments>2</experiments>
</comment>
<comment type="subcellular location">
    <subcellularLocation>
        <location evidence="1">Cytoplasm</location>
    </subcellularLocation>
</comment>
<comment type="domain">
    <text evidence="5">The horseshoe-shaped TROVE domain is built with 7 helical HEAT-like repeats, and is closed by the VWFA-like domain giving rise to a ring-shaped monomer. Single-stranded RNA is bound in the positively charged central cavity.</text>
</comment>
<comment type="domain">
    <text evidence="5">The MIDAS-like motif in the VWFA-like domain binds divalent metal cations.</text>
</comment>
<comment type="similarity">
    <text evidence="7">Belongs to the Ro 60 kDa family.</text>
</comment>
<sequence>MKNLLRAINPLNRPQTERLDERQVRNNAGGFVYTVSDESRLTRFLVLGVDGGTFYASAQKHTVQATDFVRELVQRDAALALRVTLDVVRGQRAPKADPALLVLALIAKTAPNAADRKAAWDALPEVARTGTMLLHFLAFADALGGWGRLTRRGVANVYETADVDKLALWAVKYKARDGWSQADALRKAHPKTDDAARNAVLKFMVDGVLPKVDSPALRVIEGHLKATEAQTDAAAAALMQEYRLPLEAVPTHVRGAEVYRAAMQTNGLTWLLRNLGNLGRVGVLTPNDSATVQAVIERLTDPAALKRGRIHPLDALKARLVYAQGQGVRGKGTWLPVPRVVDALEEAFTLAFGNVQPANTRHLLALDVSGSMTCGDVAGVPGLTPNMAAAAMSLIALRTEPDALTMGFAEQFRPLGITPRDTLESAMQKAQSMSFGGTDCAQPILWAAQERLDVDTFVVYTDNETWAGQVHPTVALDQYAQKMGRAPKLIVVGLTATEFSIADPQRRDMLDVVGFDAAAPNVMTAFARGEV</sequence>
<organism>
    <name type="scientific">Deinococcus radiodurans (strain ATCC 13939 / DSM 20539 / JCM 16871 / CCUG 27074 / LMG 4051 / NBRC 15346 / NCIMB 9279 / VKM B-1422 / R1)</name>
    <dbReference type="NCBI Taxonomy" id="243230"/>
    <lineage>
        <taxon>Bacteria</taxon>
        <taxon>Thermotogati</taxon>
        <taxon>Deinococcota</taxon>
        <taxon>Deinococci</taxon>
        <taxon>Deinococcales</taxon>
        <taxon>Deinococcaceae</taxon>
        <taxon>Deinococcus</taxon>
    </lineage>
</organism>
<protein>
    <recommendedName>
        <fullName evidence="1">RNA-binding protein RO60</fullName>
    </recommendedName>
    <alternativeName>
        <fullName evidence="7">60 kDa SS-A/Ro ribonucleoprotein homolog</fullName>
    </alternativeName>
    <alternativeName>
        <fullName evidence="6">Ro sixty-related protein</fullName>
    </alternativeName>
</protein>
<feature type="chain" id="PRO_0000174173" description="RNA-binding protein RO60">
    <location>
        <begin position="1"/>
        <end position="531"/>
    </location>
</feature>
<feature type="domain" description="TROVE" evidence="3">
    <location>
        <begin position="24"/>
        <end position="360"/>
    </location>
</feature>
<feature type="region of interest" description="RNA-binding" evidence="2">
    <location>
        <begin position="128"/>
        <end position="274"/>
    </location>
</feature>
<feature type="region of interest" description="VWFA-like domain" evidence="7">
    <location>
        <begin position="352"/>
        <end position="531"/>
    </location>
</feature>
<feature type="binding site" evidence="5">
    <location>
        <position position="369"/>
    </location>
    <ligand>
        <name>a divalent metal cation</name>
        <dbReference type="ChEBI" id="CHEBI:60240"/>
    </ligand>
</feature>
<feature type="binding site" evidence="5">
    <location>
        <position position="371"/>
    </location>
    <ligand>
        <name>a divalent metal cation</name>
        <dbReference type="ChEBI" id="CHEBI:60240"/>
    </ligand>
</feature>
<feature type="binding site" evidence="2">
    <location>
        <position position="438"/>
    </location>
    <ligand>
        <name>a divalent metal cation</name>
        <dbReference type="ChEBI" id="CHEBI:60240"/>
    </ligand>
</feature>
<feature type="helix" evidence="8">
    <location>
        <begin position="37"/>
        <end position="47"/>
    </location>
</feature>
<feature type="strand" evidence="8">
    <location>
        <begin position="48"/>
        <end position="59"/>
    </location>
</feature>
<feature type="helix" evidence="8">
    <location>
        <begin position="67"/>
        <end position="75"/>
    </location>
</feature>
<feature type="helix" evidence="8">
    <location>
        <begin position="77"/>
        <end position="90"/>
    </location>
</feature>
<feature type="helix" evidence="8">
    <location>
        <begin position="97"/>
        <end position="109"/>
    </location>
</feature>
<feature type="helix" evidence="8">
    <location>
        <begin position="113"/>
        <end position="126"/>
    </location>
</feature>
<feature type="helix" evidence="8">
    <location>
        <begin position="130"/>
        <end position="140"/>
    </location>
</feature>
<feature type="turn" evidence="8">
    <location>
        <begin position="141"/>
        <end position="143"/>
    </location>
</feature>
<feature type="helix" evidence="8">
    <location>
        <begin position="148"/>
        <end position="160"/>
    </location>
</feature>
<feature type="helix" evidence="8">
    <location>
        <begin position="163"/>
        <end position="172"/>
    </location>
</feature>
<feature type="strand" evidence="8">
    <location>
        <begin position="174"/>
        <end position="176"/>
    </location>
</feature>
<feature type="helix" evidence="8">
    <location>
        <begin position="181"/>
        <end position="188"/>
    </location>
</feature>
<feature type="helix" evidence="8">
    <location>
        <begin position="195"/>
        <end position="206"/>
    </location>
</feature>
<feature type="helix" evidence="8">
    <location>
        <begin position="216"/>
        <end position="226"/>
    </location>
</feature>
<feature type="helix" evidence="8">
    <location>
        <begin position="232"/>
        <end position="242"/>
    </location>
</feature>
<feature type="helix" evidence="8">
    <location>
        <begin position="246"/>
        <end position="248"/>
    </location>
</feature>
<feature type="helix" evidence="8">
    <location>
        <begin position="251"/>
        <end position="253"/>
    </location>
</feature>
<feature type="helix" evidence="8">
    <location>
        <begin position="256"/>
        <end position="263"/>
    </location>
</feature>
<feature type="helix" evidence="8">
    <location>
        <begin position="268"/>
        <end position="280"/>
    </location>
</feature>
<feature type="helix" evidence="8">
    <location>
        <begin position="289"/>
        <end position="299"/>
    </location>
</feature>
<feature type="helix" evidence="8">
    <location>
        <begin position="302"/>
        <end position="307"/>
    </location>
</feature>
<feature type="helix" evidence="8">
    <location>
        <begin position="312"/>
        <end position="323"/>
    </location>
</feature>
<feature type="helix" evidence="8">
    <location>
        <begin position="338"/>
        <end position="351"/>
    </location>
</feature>
<feature type="helix" evidence="8">
    <location>
        <begin position="352"/>
        <end position="354"/>
    </location>
</feature>
<feature type="strand" evidence="8">
    <location>
        <begin position="360"/>
        <end position="366"/>
    </location>
</feature>
<feature type="helix" evidence="8">
    <location>
        <begin position="370"/>
        <end position="373"/>
    </location>
</feature>
<feature type="helix" evidence="8">
    <location>
        <begin position="377"/>
        <end position="379"/>
    </location>
</feature>
<feature type="helix" evidence="8">
    <location>
        <begin position="385"/>
        <end position="399"/>
    </location>
</feature>
<feature type="strand" evidence="8">
    <location>
        <begin position="400"/>
        <end position="414"/>
    </location>
</feature>
<feature type="helix" evidence="8">
    <location>
        <begin position="423"/>
        <end position="429"/>
    </location>
</feature>
<feature type="strand" evidence="8">
    <location>
        <begin position="433"/>
        <end position="435"/>
    </location>
</feature>
<feature type="helix" evidence="8">
    <location>
        <begin position="442"/>
        <end position="449"/>
    </location>
</feature>
<feature type="strand" evidence="8">
    <location>
        <begin position="455"/>
        <end position="463"/>
    </location>
</feature>
<feature type="helix" evidence="8">
    <location>
        <begin position="472"/>
        <end position="483"/>
    </location>
</feature>
<feature type="strand" evidence="8">
    <location>
        <begin position="488"/>
        <end position="493"/>
    </location>
</feature>
<feature type="strand" evidence="8">
    <location>
        <begin position="507"/>
        <end position="514"/>
    </location>
</feature>
<feature type="helix" evidence="8">
    <location>
        <begin position="519"/>
        <end position="527"/>
    </location>
</feature>
<proteinExistence type="evidence at protein level"/>
<keyword id="KW-0002">3D-structure</keyword>
<keyword id="KW-0963">Cytoplasm</keyword>
<keyword id="KW-0479">Metal-binding</keyword>
<keyword id="KW-1185">Reference proteome</keyword>
<keyword id="KW-0687">Ribonucleoprotein</keyword>
<keyword id="KW-0694">RNA-binding</keyword>
<name>RO60_DEIRA</name>
<reference key="1">
    <citation type="journal article" date="1999" name="Science">
        <title>Genome sequence of the radioresistant bacterium Deinococcus radiodurans R1.</title>
        <authorList>
            <person name="White O."/>
            <person name="Eisen J.A."/>
            <person name="Heidelberg J.F."/>
            <person name="Hickey E.K."/>
            <person name="Peterson J.D."/>
            <person name="Dodson R.J."/>
            <person name="Haft D.H."/>
            <person name="Gwinn M.L."/>
            <person name="Nelson W.C."/>
            <person name="Richardson D.L."/>
            <person name="Moffat K.S."/>
            <person name="Qin H."/>
            <person name="Jiang L."/>
            <person name="Pamphile W."/>
            <person name="Crosby M."/>
            <person name="Shen M."/>
            <person name="Vamathevan J.J."/>
            <person name="Lam P."/>
            <person name="McDonald L.A."/>
            <person name="Utterback T.R."/>
            <person name="Zalewski C."/>
            <person name="Makarova K.S."/>
            <person name="Aravind L."/>
            <person name="Daly M.J."/>
            <person name="Minton K.W."/>
            <person name="Fleischmann R.D."/>
            <person name="Ketchum K.A."/>
            <person name="Nelson K.E."/>
            <person name="Salzberg S.L."/>
            <person name="Smith H.O."/>
            <person name="Venter J.C."/>
            <person name="Fraser C.M."/>
        </authorList>
    </citation>
    <scope>NUCLEOTIDE SEQUENCE [LARGE SCALE GENOMIC DNA]</scope>
    <source>
        <strain>ATCC 13939 / DSM 20539 / JCM 16871 / CCUG 27074 / LMG 4051 / NBRC 15346 / NCIMB 9279 / VKM B-1422 / R1</strain>
    </source>
</reference>
<reference key="2">
    <citation type="journal article" date="2000" name="Genes Dev.">
        <title>Ro ribonucleoproteins contribute to the resistance of Deinococcus radiodurans to ultraviolet irradiation.</title>
        <authorList>
            <person name="Chen X."/>
            <person name="Quinn A.-M."/>
            <person name="Wolin S.L."/>
        </authorList>
    </citation>
    <scope>CHARACTERIZATION</scope>
    <scope>FUNCTION</scope>
</reference>
<reference key="3">
    <citation type="journal article" date="2007" name="J. Biol. Chem.">
        <title>Crystal structure of Rsr, an ortholog of the antigenic Ro protein, links conformational flexibility to RNA binding activity.</title>
        <authorList>
            <person name="Ramesh A."/>
            <person name="Savva C.G."/>
            <person name="Holzenburg A."/>
            <person name="Sacchettini J.C."/>
        </authorList>
    </citation>
    <scope>X-RAY CRYSTALLOGRAPHY (1.89 ANGSTROMS) IN COMPLEX WITH CALCIUM IONS</scope>
    <scope>METAL-BINDING SITES</scope>
    <scope>SUBUNIT</scope>
    <scope>FUNCTION</scope>
    <scope>RNA-BINDING</scope>
    <scope>DOMAIN</scope>
</reference>
<evidence type="ECO:0000250" key="1">
    <source>
        <dbReference type="UniProtKB" id="P10155"/>
    </source>
</evidence>
<evidence type="ECO:0000250" key="2">
    <source>
        <dbReference type="UniProtKB" id="P42700"/>
    </source>
</evidence>
<evidence type="ECO:0000255" key="3">
    <source>
        <dbReference type="PROSITE-ProRule" id="PRU00343"/>
    </source>
</evidence>
<evidence type="ECO:0000269" key="4">
    <source>
    </source>
</evidence>
<evidence type="ECO:0000269" key="5">
    <source>
    </source>
</evidence>
<evidence type="ECO:0000303" key="6">
    <source>
    </source>
</evidence>
<evidence type="ECO:0000305" key="7"/>
<evidence type="ECO:0007829" key="8">
    <source>
        <dbReference type="PDB" id="2NVO"/>
    </source>
</evidence>